<gene>
    <name type="primary">celC</name>
    <name type="synonym">cel5A</name>
    <name type="ordered locus">CJA_1462</name>
</gene>
<reference key="1">
    <citation type="journal article" date="1991" name="Biochem. J.">
        <title>The cellodextrinase from Pseudomonas fluorescens subsp. cellulosa consists of multiple functional domains.</title>
        <authorList>
            <person name="Ferreira L.M.A."/>
            <person name="Hazlewood G.P."/>
            <person name="Barker P.J."/>
            <person name="Gilbert H.J."/>
        </authorList>
    </citation>
    <scope>NUCLEOTIDE SEQUENCE [GENOMIC DNA]</scope>
    <scope>PROTEIN SEQUENCE OF 38-47</scope>
</reference>
<reference key="2">
    <citation type="journal article" date="2008" name="J. Bacteriol.">
        <title>Insights into plant cell wall degradation from the genome sequence of the soil bacterium Cellvibrio japonicus.</title>
        <authorList>
            <person name="DeBoy R.T."/>
            <person name="Mongodin E.F."/>
            <person name="Fouts D.E."/>
            <person name="Tailford L.E."/>
            <person name="Khouri H."/>
            <person name="Emerson J.B."/>
            <person name="Mohamoud Y."/>
            <person name="Watkins K."/>
            <person name="Henrissat B."/>
            <person name="Gilbert H.J."/>
            <person name="Nelson K.E."/>
        </authorList>
    </citation>
    <scope>NUCLEOTIDE SEQUENCE [LARGE SCALE GENOMIC DNA]</scope>
    <source>
        <strain>Ueda107</strain>
    </source>
</reference>
<keyword id="KW-0119">Carbohydrate metabolism</keyword>
<keyword id="KW-0136">Cellulose degradation</keyword>
<keyword id="KW-0903">Direct protein sequencing</keyword>
<keyword id="KW-1015">Disulfide bond</keyword>
<keyword id="KW-0326">Glycosidase</keyword>
<keyword id="KW-0378">Hydrolase</keyword>
<keyword id="KW-0624">Polysaccharide degradation</keyword>
<keyword id="KW-1185">Reference proteome</keyword>
<keyword id="KW-0732">Signal</keyword>
<comment type="catalytic activity">
    <reaction>
        <text>Endohydrolysis of (1-&gt;4)-beta-D-glucosidic linkages in cellulose, lichenin and cereal beta-D-glucans.</text>
        <dbReference type="EC" id="3.2.1.4"/>
    </reaction>
</comment>
<comment type="similarity">
    <text evidence="6">Belongs to the glycosyl hydrolase 5 (cellulase A) family.</text>
</comment>
<proteinExistence type="evidence at protein level"/>
<accession>P27033</accession>
<accession>B3PDK2</accession>
<feature type="signal peptide" evidence="5">
    <location>
        <begin position="1"/>
        <end position="37"/>
    </location>
</feature>
<feature type="chain" id="PRO_0000007865" description="Endoglucanase C">
    <location>
        <begin position="38"/>
        <end position="747"/>
    </location>
</feature>
<feature type="domain" description="CBM2" evidence="3">
    <location>
        <begin position="38"/>
        <end position="136"/>
    </location>
</feature>
<feature type="domain" description="CBM10" evidence="2">
    <location>
        <begin position="182"/>
        <end position="211"/>
    </location>
</feature>
<feature type="region of interest" description="Disordered" evidence="4">
    <location>
        <begin position="226"/>
        <end position="283"/>
    </location>
</feature>
<feature type="region of interest" description="Catalytic">
    <location>
        <begin position="280"/>
        <end position="747"/>
    </location>
</feature>
<feature type="compositionally biased region" description="Low complexity" evidence="4">
    <location>
        <begin position="227"/>
        <end position="281"/>
    </location>
</feature>
<feature type="active site" description="Proton donor" evidence="1">
    <location>
        <position position="502"/>
    </location>
</feature>
<feature type="active site" description="Nucleophile" evidence="1">
    <location>
        <position position="652"/>
    </location>
</feature>
<feature type="disulfide bond" evidence="1">
    <location>
        <begin position="39"/>
        <end position="133"/>
    </location>
</feature>
<feature type="disulfide bond" evidence="1">
    <location>
        <begin position="183"/>
        <end position="214"/>
    </location>
</feature>
<feature type="disulfide bond" evidence="1">
    <location>
        <begin position="193"/>
        <end position="208"/>
    </location>
</feature>
<feature type="sequence conflict" description="In Ref. 1; CAA43597." evidence="6" ref="1">
    <original>A</original>
    <variation>P</variation>
    <location>
        <position position="85"/>
    </location>
</feature>
<feature type="sequence conflict" description="In Ref. 1; CAA43597." evidence="6" ref="1">
    <original>G</original>
    <variation>GG</variation>
    <location>
        <position position="181"/>
    </location>
</feature>
<feature type="sequence conflict" description="In Ref. 1; CAA43597." evidence="6" ref="1">
    <original>S</original>
    <variation>C</variation>
    <location>
        <position position="262"/>
    </location>
</feature>
<feature type="sequence conflict" description="In Ref. 1; CAA43597." evidence="6" ref="1">
    <original>Q</original>
    <variation>K</variation>
    <location>
        <position position="291"/>
    </location>
</feature>
<dbReference type="EC" id="3.2.1.4"/>
<dbReference type="EMBL" id="X61299">
    <property type="protein sequence ID" value="CAA43597.1"/>
    <property type="molecule type" value="Genomic_DNA"/>
</dbReference>
<dbReference type="EMBL" id="CP000934">
    <property type="protein sequence ID" value="ACE82870.1"/>
    <property type="molecule type" value="Genomic_DNA"/>
</dbReference>
<dbReference type="PIR" id="S19652">
    <property type="entry name" value="S19652"/>
</dbReference>
<dbReference type="RefSeq" id="WP_012487092.1">
    <property type="nucleotide sequence ID" value="NC_010995.1"/>
</dbReference>
<dbReference type="SMR" id="P27033"/>
<dbReference type="STRING" id="498211.CJA_1462"/>
<dbReference type="CAZy" id="CBM10">
    <property type="family name" value="Carbohydrate-Binding Module Family 10"/>
</dbReference>
<dbReference type="CAZy" id="CBM2">
    <property type="family name" value="Carbohydrate-Binding Module Family 2"/>
</dbReference>
<dbReference type="CAZy" id="GH5">
    <property type="family name" value="Glycoside Hydrolase Family 5"/>
</dbReference>
<dbReference type="KEGG" id="cja:CJA_1462"/>
<dbReference type="eggNOG" id="COG2730">
    <property type="taxonomic scope" value="Bacteria"/>
</dbReference>
<dbReference type="HOGENOM" id="CLU_015313_0_0_6"/>
<dbReference type="OrthoDB" id="1153097at2"/>
<dbReference type="Proteomes" id="UP000001036">
    <property type="component" value="Chromosome"/>
</dbReference>
<dbReference type="GO" id="GO:0008810">
    <property type="term" value="F:cellulase activity"/>
    <property type="evidence" value="ECO:0007669"/>
    <property type="project" value="UniProtKB-EC"/>
</dbReference>
<dbReference type="GO" id="GO:0030248">
    <property type="term" value="F:cellulose binding"/>
    <property type="evidence" value="ECO:0007669"/>
    <property type="project" value="InterPro"/>
</dbReference>
<dbReference type="GO" id="GO:0030245">
    <property type="term" value="P:cellulose catabolic process"/>
    <property type="evidence" value="ECO:0007669"/>
    <property type="project" value="UniProtKB-KW"/>
</dbReference>
<dbReference type="Gene3D" id="2.60.40.290">
    <property type="match status" value="1"/>
</dbReference>
<dbReference type="Gene3D" id="2.30.32.30">
    <property type="entry name" value="CBM10"/>
    <property type="match status" value="1"/>
</dbReference>
<dbReference type="Gene3D" id="3.20.20.80">
    <property type="entry name" value="Glycosidases"/>
    <property type="match status" value="1"/>
</dbReference>
<dbReference type="InterPro" id="IPR001919">
    <property type="entry name" value="CBD2"/>
</dbReference>
<dbReference type="InterPro" id="IPR009031">
    <property type="entry name" value="CBM10"/>
</dbReference>
<dbReference type="InterPro" id="IPR002883">
    <property type="entry name" value="CBM10/Dockerin_dom"/>
</dbReference>
<dbReference type="InterPro" id="IPR036601">
    <property type="entry name" value="CBM10_sf"/>
</dbReference>
<dbReference type="InterPro" id="IPR008965">
    <property type="entry name" value="CBM2/CBM3_carb-bd_dom_sf"/>
</dbReference>
<dbReference type="InterPro" id="IPR012291">
    <property type="entry name" value="CBM2_carb-bd_dom_sf"/>
</dbReference>
<dbReference type="InterPro" id="IPR018366">
    <property type="entry name" value="CBM2_CS"/>
</dbReference>
<dbReference type="InterPro" id="IPR001547">
    <property type="entry name" value="Glyco_hydro_5"/>
</dbReference>
<dbReference type="InterPro" id="IPR018087">
    <property type="entry name" value="Glyco_hydro_5_CS"/>
</dbReference>
<dbReference type="InterPro" id="IPR017853">
    <property type="entry name" value="Glycoside_hydrolase_SF"/>
</dbReference>
<dbReference type="PANTHER" id="PTHR35923:SF2">
    <property type="entry name" value="ENDOGLUCANASE"/>
    <property type="match status" value="1"/>
</dbReference>
<dbReference type="PANTHER" id="PTHR35923">
    <property type="entry name" value="MAJOR EXTRACELLULAR ENDOGLUCANASE"/>
    <property type="match status" value="1"/>
</dbReference>
<dbReference type="Pfam" id="PF02013">
    <property type="entry name" value="CBM_10"/>
    <property type="match status" value="1"/>
</dbReference>
<dbReference type="Pfam" id="PF00553">
    <property type="entry name" value="CBM_2"/>
    <property type="match status" value="1"/>
</dbReference>
<dbReference type="Pfam" id="PF00150">
    <property type="entry name" value="Cellulase"/>
    <property type="match status" value="1"/>
</dbReference>
<dbReference type="SMART" id="SM00637">
    <property type="entry name" value="CBD_II"/>
    <property type="match status" value="1"/>
</dbReference>
<dbReference type="SMART" id="SM01064">
    <property type="entry name" value="CBM_10"/>
    <property type="match status" value="1"/>
</dbReference>
<dbReference type="SUPFAM" id="SSF51445">
    <property type="entry name" value="(Trans)glycosidases"/>
    <property type="match status" value="1"/>
</dbReference>
<dbReference type="SUPFAM" id="SSF49384">
    <property type="entry name" value="Carbohydrate-binding domain"/>
    <property type="match status" value="1"/>
</dbReference>
<dbReference type="SUPFAM" id="SSF57615">
    <property type="entry name" value="Type X cellulose binding domain, CBDX"/>
    <property type="match status" value="1"/>
</dbReference>
<dbReference type="PROSITE" id="PS51763">
    <property type="entry name" value="CBM10"/>
    <property type="match status" value="1"/>
</dbReference>
<dbReference type="PROSITE" id="PS51173">
    <property type="entry name" value="CBM2"/>
    <property type="match status" value="1"/>
</dbReference>
<dbReference type="PROSITE" id="PS00561">
    <property type="entry name" value="CBM2_A"/>
    <property type="match status" value="1"/>
</dbReference>
<dbReference type="PROSITE" id="PS00659">
    <property type="entry name" value="GLYCOSYL_HYDROL_F5"/>
    <property type="match status" value="1"/>
</dbReference>
<name>GUNC_CELJU</name>
<protein>
    <recommendedName>
        <fullName>Endoglucanase C</fullName>
        <ecNumber>3.2.1.4</ecNumber>
    </recommendedName>
    <alternativeName>
        <fullName>Cellodextrinase C</fullName>
    </alternativeName>
    <alternativeName>
        <fullName>Cellulase C</fullName>
    </alternativeName>
    <alternativeName>
        <fullName>Endo-1,4-beta-glucanase C</fullName>
        <shortName>EGC</shortName>
    </alternativeName>
</protein>
<sequence>MGHVTSPSKRYPASFKRAGSILGVSIALAAFSNVAAAGCEYVVTNSWGSGFTAAIRITNSTSSVINGWNVSWQYNSNRVTNLWNANLSGSNPYSASNLSWNGTIQPGQTVEFGFQGVTNSGTVESPTVNGAACTGGTSSSVSSSSVVSSSSSSRSSVSSSSVVSSSSSVVSSSSSSVVSGGQCNWYGTLYPLCVSTTSGWGYENNRSCISPSTCSAQPAPYGIVGGSSSPSSISSSSVRSSSSSSVVPPSSSSSSSVPSSSSSSVSSSSVVSSSSSSVSVPGTGVFRVNTQGNLTKDGQLLPARCGNWFGLEGRHEPSNDADNPSGAPMELYAGNMWWVNNSQGSGRTIQQTMTELKQQGITMLRLPIAPQTLDANDPQGRSPNLKNHQSIRQSNARQALEDFIKLADQNDIQIFIDIHSCSNYVGWRAGRLDARPPYVDANRVGYDFTREEYSCSATNNPSSVTRIHAYDKQKWLANLREIAGLSAKLGVSNLIGIDVFNEPYDYTWAEWKGMVEEAYQAINEVNPNMLIIVEGISANANTQDGTPDTSVPVPHGSTDLNPNWGENLYEAGANPPNIPKDRLLFSPHTYGPSVFVQRQFMDPAQTECAGLEGDEAAQARCRIVINPTVLEQGWEEHFGYLRELGYGILIGEFGGNMDWPGAKSSQADRNAWSHITTNVDQQWQQAAASYFKRKGINACYWSMNPESADTMGWYLTPWDPVTANDMWGQWTGFDPRKTQLLHNMWGL</sequence>
<evidence type="ECO:0000250" key="1"/>
<evidence type="ECO:0000255" key="2">
    <source>
        <dbReference type="PROSITE-ProRule" id="PRU01099"/>
    </source>
</evidence>
<evidence type="ECO:0000255" key="3">
    <source>
        <dbReference type="PROSITE-ProRule" id="PRU01135"/>
    </source>
</evidence>
<evidence type="ECO:0000256" key="4">
    <source>
        <dbReference type="SAM" id="MobiDB-lite"/>
    </source>
</evidence>
<evidence type="ECO:0000269" key="5">
    <source>
    </source>
</evidence>
<evidence type="ECO:0000305" key="6"/>
<organism>
    <name type="scientific">Cellvibrio japonicus (strain Ueda107)</name>
    <name type="common">Pseudomonas fluorescens subsp. cellulosa</name>
    <dbReference type="NCBI Taxonomy" id="498211"/>
    <lineage>
        <taxon>Bacteria</taxon>
        <taxon>Pseudomonadati</taxon>
        <taxon>Pseudomonadota</taxon>
        <taxon>Gammaproteobacteria</taxon>
        <taxon>Cellvibrionales</taxon>
        <taxon>Cellvibrionaceae</taxon>
        <taxon>Cellvibrio</taxon>
    </lineage>
</organism>